<dbReference type="EMBL" id="AE000782">
    <property type="protein sequence ID" value="AAB89263.1"/>
    <property type="molecule type" value="Genomic_DNA"/>
</dbReference>
<dbReference type="PIR" id="C69499">
    <property type="entry name" value="C69499"/>
</dbReference>
<dbReference type="SMR" id="O28283"/>
<dbReference type="STRING" id="224325.AF_1996"/>
<dbReference type="PaxDb" id="224325-AF_1996"/>
<dbReference type="EnsemblBacteria" id="AAB89263">
    <property type="protein sequence ID" value="AAB89263"/>
    <property type="gene ID" value="AF_1996"/>
</dbReference>
<dbReference type="KEGG" id="afu:AF_1996"/>
<dbReference type="eggNOG" id="arCOG02219">
    <property type="taxonomic scope" value="Archaea"/>
</dbReference>
<dbReference type="HOGENOM" id="CLU_2519567_0_0_2"/>
<dbReference type="OrthoDB" id="38049at2157"/>
<dbReference type="PhylomeDB" id="O28283"/>
<dbReference type="Proteomes" id="UP000002199">
    <property type="component" value="Chromosome"/>
</dbReference>
<dbReference type="CDD" id="cd09881">
    <property type="entry name" value="PIN_VapC4-5_FitB-like"/>
    <property type="match status" value="1"/>
</dbReference>
<dbReference type="Gene3D" id="3.40.50.1010">
    <property type="entry name" value="5'-nuclease"/>
    <property type="match status" value="1"/>
</dbReference>
<dbReference type="InterPro" id="IPR029060">
    <property type="entry name" value="PIN-like_dom_sf"/>
</dbReference>
<dbReference type="SUPFAM" id="SSF88723">
    <property type="entry name" value="PIN domain-like"/>
    <property type="match status" value="1"/>
</dbReference>
<protein>
    <recommendedName>
        <fullName>Uncharacterized protein AF_1996</fullName>
    </recommendedName>
</protein>
<reference key="1">
    <citation type="journal article" date="1997" name="Nature">
        <title>The complete genome sequence of the hyperthermophilic, sulphate-reducing archaeon Archaeoglobus fulgidus.</title>
        <authorList>
            <person name="Klenk H.-P."/>
            <person name="Clayton R.A."/>
            <person name="Tomb J.-F."/>
            <person name="White O."/>
            <person name="Nelson K.E."/>
            <person name="Ketchum K.A."/>
            <person name="Dodson R.J."/>
            <person name="Gwinn M.L."/>
            <person name="Hickey E.K."/>
            <person name="Peterson J.D."/>
            <person name="Richardson D.L."/>
            <person name="Kerlavage A.R."/>
            <person name="Graham D.E."/>
            <person name="Kyrpides N.C."/>
            <person name="Fleischmann R.D."/>
            <person name="Quackenbush J."/>
            <person name="Lee N.H."/>
            <person name="Sutton G.G."/>
            <person name="Gill S.R."/>
            <person name="Kirkness E.F."/>
            <person name="Dougherty B.A."/>
            <person name="McKenney K."/>
            <person name="Adams M.D."/>
            <person name="Loftus B.J."/>
            <person name="Peterson S.N."/>
            <person name="Reich C.I."/>
            <person name="McNeil L.K."/>
            <person name="Badger J.H."/>
            <person name="Glodek A."/>
            <person name="Zhou L."/>
            <person name="Overbeek R."/>
            <person name="Gocayne J.D."/>
            <person name="Weidman J.F."/>
            <person name="McDonald L.A."/>
            <person name="Utterback T.R."/>
            <person name="Cotton M.D."/>
            <person name="Spriggs T."/>
            <person name="Artiach P."/>
            <person name="Kaine B.P."/>
            <person name="Sykes S.M."/>
            <person name="Sadow P.W."/>
            <person name="D'Andrea K.P."/>
            <person name="Bowman C."/>
            <person name="Fujii C."/>
            <person name="Garland S.A."/>
            <person name="Mason T.M."/>
            <person name="Olsen G.J."/>
            <person name="Fraser C.M."/>
            <person name="Smith H.O."/>
            <person name="Woese C.R."/>
            <person name="Venter J.C."/>
        </authorList>
    </citation>
    <scope>NUCLEOTIDE SEQUENCE [LARGE SCALE GENOMIC DNA]</scope>
    <source>
        <strain>ATCC 49558 / DSM 4304 / JCM 9628 / NBRC 100126 / VC-16</strain>
    </source>
</reference>
<evidence type="ECO:0000305" key="1"/>
<sequence length="84" mass="9481">MKNGCNPCVIIDLFKGDKGLLEKLNGDTVYGISVITLFELQCGSLKEREEIFLEKIPKLNFEESSAKLAGKIFRELKKGAEFQR</sequence>
<feature type="chain" id="PRO_0000107177" description="Uncharacterized protein AF_1996">
    <location>
        <begin position="1"/>
        <end position="84"/>
    </location>
</feature>
<keyword id="KW-1185">Reference proteome</keyword>
<organism>
    <name type="scientific">Archaeoglobus fulgidus (strain ATCC 49558 / DSM 4304 / JCM 9628 / NBRC 100126 / VC-16)</name>
    <dbReference type="NCBI Taxonomy" id="224325"/>
    <lineage>
        <taxon>Archaea</taxon>
        <taxon>Methanobacteriati</taxon>
        <taxon>Methanobacteriota</taxon>
        <taxon>Archaeoglobi</taxon>
        <taxon>Archaeoglobales</taxon>
        <taxon>Archaeoglobaceae</taxon>
        <taxon>Archaeoglobus</taxon>
    </lineage>
</organism>
<name>Y1996_ARCFU</name>
<accession>O28283</accession>
<gene>
    <name type="ordered locus">AF_1996</name>
</gene>
<proteinExistence type="predicted"/>
<comment type="similarity">
    <text evidence="1">To M.jannaschii MJ1121.</text>
</comment>